<proteinExistence type="evidence at protein level"/>
<protein>
    <recommendedName>
        <fullName evidence="5">3-ketosteroid-9-alpha-monooxygenase, oxygenase component</fullName>
    </recommendedName>
    <alternativeName>
        <fullName evidence="5">3-ketosteroid-9-alpha-hydroxylase, oxygenase component</fullName>
        <shortName evidence="5">KSH</shortName>
    </alternativeName>
    <alternativeName>
        <fullName evidence="5">Androsta-1,4-diene-3,17-dione 9-alpha-hydroxylase</fullName>
        <ecNumber evidence="3 8">1.14.15.30</ecNumber>
    </alternativeName>
    <alternativeName>
        <fullName evidence="7">Rieske-type oxygenase</fullName>
        <shortName evidence="7">RO</shortName>
    </alternativeName>
</protein>
<feature type="chain" id="PRO_0000438402" description="3-ketosteroid-9-alpha-monooxygenase, oxygenase component">
    <location>
        <begin position="1"/>
        <end position="378"/>
    </location>
</feature>
<feature type="domain" description="Rieske" evidence="2">
    <location>
        <begin position="26"/>
        <end position="128"/>
    </location>
</feature>
<feature type="binding site" evidence="2">
    <location>
        <position position="67"/>
    </location>
    <ligand>
        <name>[2Fe-2S] cluster</name>
        <dbReference type="ChEBI" id="CHEBI:190135"/>
    </ligand>
</feature>
<feature type="binding site" evidence="2">
    <location>
        <position position="69"/>
    </location>
    <ligand>
        <name>[2Fe-2S] cluster</name>
        <dbReference type="ChEBI" id="CHEBI:190135"/>
    </ligand>
</feature>
<feature type="binding site" evidence="2">
    <location>
        <position position="86"/>
    </location>
    <ligand>
        <name>[2Fe-2S] cluster</name>
        <dbReference type="ChEBI" id="CHEBI:190135"/>
    </ligand>
</feature>
<feature type="binding site" evidence="2">
    <location>
        <position position="89"/>
    </location>
    <ligand>
        <name>[2Fe-2S] cluster</name>
        <dbReference type="ChEBI" id="CHEBI:190135"/>
    </ligand>
</feature>
<feature type="binding site" evidence="1">
    <location>
        <position position="175"/>
    </location>
    <ligand>
        <name>Fe cation</name>
        <dbReference type="ChEBI" id="CHEBI:24875"/>
    </ligand>
</feature>
<feature type="binding site" evidence="1">
    <location>
        <position position="181"/>
    </location>
    <ligand>
        <name>Fe cation</name>
        <dbReference type="ChEBI" id="CHEBI:24875"/>
    </ligand>
</feature>
<feature type="binding site" evidence="1">
    <location>
        <position position="186"/>
    </location>
    <ligand>
        <name>Fe cation</name>
        <dbReference type="ChEBI" id="CHEBI:24875"/>
    </ligand>
</feature>
<feature type="binding site" evidence="1">
    <location>
        <position position="305"/>
    </location>
    <ligand>
        <name>Fe cation</name>
        <dbReference type="ChEBI" id="CHEBI:24875"/>
    </ligand>
</feature>
<comment type="function">
    <text evidence="3 4">In vitro, catalyzes the introduction of a 9alpha-hydroxyl moiety into the ring B of 3-ketosteroid substrates such as 1,4-androstadiene-3,17-dione (ADD), 4-androstene-3,17-dione (AD), 4-androstene-17beta-ol-3-one (testosterone), 4-pregnene-3,20-dione (progesterone), 19-nor-4-androstene-3,17-dione (nordion), 1-(5alpha)-androstene-3,17-dione, 5alpha-androstane-3,17-dione and 5beta-androstane-3,17-dione (PubMed:19561185, PubMed:21642460). KSH has the highest activity with 3-keto-delta4 steroid substrates (PubMed:19561185).</text>
</comment>
<comment type="catalytic activity">
    <reaction evidence="3 8">
        <text>androsta-1,4-diene-3,17-dione + 2 reduced [2Fe-2S]-[ferredoxin] + O2 + 2 H(+) = 9alpha-hydroxyandrosta-1,4-diene-3,17-dione + 2 oxidized [2Fe-2S]-[ferredoxin] + H2O</text>
        <dbReference type="Rhea" id="RHEA:32199"/>
        <dbReference type="Rhea" id="RHEA-COMP:10000"/>
        <dbReference type="Rhea" id="RHEA-COMP:10001"/>
        <dbReference type="ChEBI" id="CHEBI:15377"/>
        <dbReference type="ChEBI" id="CHEBI:15378"/>
        <dbReference type="ChEBI" id="CHEBI:15379"/>
        <dbReference type="ChEBI" id="CHEBI:33737"/>
        <dbReference type="ChEBI" id="CHEBI:33738"/>
        <dbReference type="ChEBI" id="CHEBI:40799"/>
        <dbReference type="ChEBI" id="CHEBI:63641"/>
        <dbReference type="EC" id="1.14.15.30"/>
    </reaction>
</comment>
<comment type="cofactor">
    <cofactor evidence="2 3">
        <name>[2Fe-2S] cluster</name>
        <dbReference type="ChEBI" id="CHEBI:190135"/>
    </cofactor>
    <text evidence="2 3">Binds 1 [2Fe-2S] cluster per subunit.</text>
</comment>
<comment type="cofactor">
    <cofactor evidence="3">
        <name>Fe cation</name>
        <dbReference type="ChEBI" id="CHEBI:24875"/>
    </cofactor>
    <text evidence="3">Binds 1 Fe cation.</text>
</comment>
<comment type="activity regulation">
    <text evidence="3">KSH activity is completely inhibited by zinc ions. KshA is specifically inhibited by Fe(3+), Co(2+), Zn(2+) and Ni(2+) ions.</text>
</comment>
<comment type="biophysicochemical properties">
    <kinetics>
        <KM evidence="3">10 uM for nordion</KM>
        <KM evidence="3">23 uM for 5alpha-androstane-3,17-dione</KM>
        <KM evidence="3">33 uM for 5beta-androstane-3,17-dione</KM>
    </kinetics>
    <phDependence>
        <text evidence="3">Optimum pH is 7.</text>
    </phDependence>
    <temperatureDependence>
        <text evidence="3">Optimum temperature is 33 degrees Celsius.</text>
    </temperatureDependence>
</comment>
<comment type="subunit">
    <text evidence="1 3">Homotrimer (By similarity). The two-component system 3-ketosteroid-9-alpha-monooxygenase is composed of an oxygenase component KshA and a reductase component KshB (PubMed:19561185).</text>
</comment>
<comment type="induction">
    <text evidence="4">By cholic acid.</text>
</comment>
<organism>
    <name type="scientific">Rhodococcus rhodochrous</name>
    <dbReference type="NCBI Taxonomy" id="1829"/>
    <lineage>
        <taxon>Bacteria</taxon>
        <taxon>Bacillati</taxon>
        <taxon>Actinomycetota</taxon>
        <taxon>Actinomycetes</taxon>
        <taxon>Mycobacteriales</taxon>
        <taxon>Nocardiaceae</taxon>
        <taxon>Rhodococcus</taxon>
    </lineage>
</organism>
<reference key="1">
    <citation type="journal article" date="2009" name="Appl. Environ. Microbiol.">
        <title>Rhodococcus rhodochrous DSM 43269 3-ketosteroid 9alpha-hydroxylase, a two-component iron-sulfur-containing monooxygenase with subtle steroid substrate specificity.</title>
        <authorList>
            <person name="Petrusma M."/>
            <person name="Dijkhuizen L."/>
            <person name="van der Geize R."/>
        </authorList>
    </citation>
    <scope>NUCLEOTIDE SEQUENCE [GENOMIC DNA]</scope>
    <scope>FUNCTION</scope>
    <scope>CATALYTIC ACTIVITY</scope>
    <scope>BIOPHYSICOCHEMICAL PROPERTIES</scope>
    <scope>COFACTOR</scope>
    <scope>ACTIVITY REGULATION</scope>
    <scope>SUBUNIT</scope>
    <scope>SUBSTRATE SPECIFICITY</scope>
    <source>
        <strain>DSM 43269</strain>
    </source>
</reference>
<reference key="2">
    <citation type="journal article" date="2011" name="J. Bacteriol.">
        <title>Multiplicity of 3-ketosteroid-9alpha-hydroxylase enzymes in Rhodococcus rhodochrous DSM43269 for specific degradation of different classes of steroids.</title>
        <authorList>
            <person name="Petrusma M."/>
            <person name="Hessels G."/>
            <person name="Dijkhuizen L."/>
            <person name="van der Geize R."/>
        </authorList>
    </citation>
    <scope>NUCLEOTIDE SEQUENCE [GENOMIC DNA]</scope>
    <scope>FUNCTION</scope>
    <scope>CATALYTIC ACTIVITY</scope>
    <scope>INDUCTION</scope>
    <scope>SUBSTRATE SPECIFICITY</scope>
    <source>
        <strain>DSM 43269</strain>
    </source>
</reference>
<sequence length="378" mass="43507">MTVPQERIEIRNIDPGTNPTRFARGWHCIGLAKDFRDGKPHQVKVFGTDLVVFADTAGKLHVLDAFCRHMGGNLARGEIKGDTIACPFHDWRWNGQGRCEAVPYARRTPKLGRTKAWTTMERNGVLFVWHCPQGSEPTPELAIPEIEGYEDGQWSDWTWTTIHVEGSHCREIVDNVVDMAHFFYVHFQMPEYFKNVFDGHIAGQHMRSYGRDDIKTGVQMDLPEAQTISDAFYYGPSFMLDTIYTVSEGTTIESKLINCHYPVTNNSFVLQFGTIVKKIEGMSEEQAAEMATMFTDGLEEQFAQDIEIWKHKSRIENPLLTEEDGPVYQLRRWYNQFYVDLEDVTPDMTQRFEFEVDTSRALESWHKEVEENLAGTAE</sequence>
<gene>
    <name evidence="6" type="primary">kshA</name>
    <name evidence="6" type="synonym">kshA4</name>
</gene>
<accession>B6V6V5</accession>
<keyword id="KW-0001">2Fe-2S</keyword>
<keyword id="KW-0408">Iron</keyword>
<keyword id="KW-0411">Iron-sulfur</keyword>
<keyword id="KW-0442">Lipid degradation</keyword>
<keyword id="KW-0443">Lipid metabolism</keyword>
<keyword id="KW-0479">Metal-binding</keyword>
<keyword id="KW-0560">Oxidoreductase</keyword>
<keyword id="KW-0753">Steroid metabolism</keyword>
<name>KSHA4_RHORH</name>
<dbReference type="EC" id="1.14.15.30" evidence="3 8"/>
<dbReference type="EMBL" id="FJ238095">
    <property type="protein sequence ID" value="ACI62780.1"/>
    <property type="molecule type" value="Genomic_DNA"/>
</dbReference>
<dbReference type="EMBL" id="HQ425876">
    <property type="protein sequence ID" value="ADY18323.1"/>
    <property type="molecule type" value="Genomic_DNA"/>
</dbReference>
<dbReference type="SMR" id="B6V6V5"/>
<dbReference type="BioCyc" id="MetaCyc:MONOMER-16921"/>
<dbReference type="BRENDA" id="1.14.15.30">
    <property type="organism ID" value="5395"/>
</dbReference>
<dbReference type="GO" id="GO:0051537">
    <property type="term" value="F:2 iron, 2 sulfur cluster binding"/>
    <property type="evidence" value="ECO:0000314"/>
    <property type="project" value="UniProtKB"/>
</dbReference>
<dbReference type="GO" id="GO:0036200">
    <property type="term" value="F:3-ketosteroid 9-alpha-monooxygenase activity"/>
    <property type="evidence" value="ECO:0000314"/>
    <property type="project" value="UniProtKB"/>
</dbReference>
<dbReference type="GO" id="GO:0005506">
    <property type="term" value="F:iron ion binding"/>
    <property type="evidence" value="ECO:0000314"/>
    <property type="project" value="UniProtKB"/>
</dbReference>
<dbReference type="GO" id="GO:0008203">
    <property type="term" value="P:cholesterol metabolic process"/>
    <property type="evidence" value="ECO:0007669"/>
    <property type="project" value="InterPro"/>
</dbReference>
<dbReference type="GO" id="GO:0016042">
    <property type="term" value="P:lipid catabolic process"/>
    <property type="evidence" value="ECO:0007669"/>
    <property type="project" value="UniProtKB-KW"/>
</dbReference>
<dbReference type="FunFam" id="2.102.10.10:FF:000012">
    <property type="entry name" value="3-ketosteroid-9-alpha-hydroxylase oxygenase subunit"/>
    <property type="match status" value="1"/>
</dbReference>
<dbReference type="FunFam" id="3.90.380.10:FF:000004">
    <property type="entry name" value="3-ketosteroid-9-alpha-hydroxylase oxygenase subunit"/>
    <property type="match status" value="1"/>
</dbReference>
<dbReference type="Gene3D" id="3.90.380.10">
    <property type="entry name" value="Naphthalene 1,2-dioxygenase Alpha Subunit, Chain A, domain 1"/>
    <property type="match status" value="1"/>
</dbReference>
<dbReference type="Gene3D" id="2.102.10.10">
    <property type="entry name" value="Rieske [2Fe-2S] iron-sulphur domain"/>
    <property type="match status" value="1"/>
</dbReference>
<dbReference type="InterPro" id="IPR050584">
    <property type="entry name" value="Cholesterol_7-desaturase"/>
</dbReference>
<dbReference type="InterPro" id="IPR045605">
    <property type="entry name" value="KshA-like_C"/>
</dbReference>
<dbReference type="InterPro" id="IPR017941">
    <property type="entry name" value="Rieske_2Fe-2S"/>
</dbReference>
<dbReference type="InterPro" id="IPR036922">
    <property type="entry name" value="Rieske_2Fe-2S_sf"/>
</dbReference>
<dbReference type="PANTHER" id="PTHR21266:SF60">
    <property type="entry name" value="3-KETOSTEROID-9-ALPHA-MONOOXYGENASE, OXYGENASE COMPONENT"/>
    <property type="match status" value="1"/>
</dbReference>
<dbReference type="PANTHER" id="PTHR21266">
    <property type="entry name" value="IRON-SULFUR DOMAIN CONTAINING PROTEIN"/>
    <property type="match status" value="1"/>
</dbReference>
<dbReference type="Pfam" id="PF19298">
    <property type="entry name" value="KshA_C"/>
    <property type="match status" value="1"/>
</dbReference>
<dbReference type="Pfam" id="PF00355">
    <property type="entry name" value="Rieske"/>
    <property type="match status" value="1"/>
</dbReference>
<dbReference type="SUPFAM" id="SSF55961">
    <property type="entry name" value="Bet v1-like"/>
    <property type="match status" value="1"/>
</dbReference>
<dbReference type="SUPFAM" id="SSF50022">
    <property type="entry name" value="ISP domain"/>
    <property type="match status" value="1"/>
</dbReference>
<dbReference type="PROSITE" id="PS51296">
    <property type="entry name" value="RIESKE"/>
    <property type="match status" value="1"/>
</dbReference>
<evidence type="ECO:0000250" key="1">
    <source>
        <dbReference type="UniProtKB" id="F1CMY8"/>
    </source>
</evidence>
<evidence type="ECO:0000255" key="2">
    <source>
        <dbReference type="PROSITE-ProRule" id="PRU00628"/>
    </source>
</evidence>
<evidence type="ECO:0000269" key="3">
    <source>
    </source>
</evidence>
<evidence type="ECO:0000269" key="4">
    <source>
    </source>
</evidence>
<evidence type="ECO:0000303" key="5">
    <source>
    </source>
</evidence>
<evidence type="ECO:0000303" key="6">
    <source>
    </source>
</evidence>
<evidence type="ECO:0000305" key="7">
    <source>
    </source>
</evidence>
<evidence type="ECO:0000305" key="8">
    <source>
    </source>
</evidence>